<comment type="function">
    <text evidence="1">Component of the cytochrome b6-f complex, which mediates electron transfer between photosystem II (PSII) and photosystem I (PSI), cyclic electron flow around PSI, and state transitions.</text>
</comment>
<comment type="subunit">
    <text evidence="1">The 4 large subunits of the cytochrome b6-f complex are cytochrome b6, subunit IV (17 kDa polypeptide, PetD), cytochrome f and the Rieske protein, while the 4 small subunits are PetG, PetL, PetM and PetN. The complex functions as a dimer.</text>
</comment>
<comment type="subcellular location">
    <subcellularLocation>
        <location evidence="1">Cellular thylakoid membrane</location>
        <topology evidence="1">Single-pass membrane protein</topology>
    </subcellularLocation>
</comment>
<comment type="similarity">
    <text evidence="1">Belongs to the PetM family.</text>
</comment>
<dbReference type="EMBL" id="AJ299220">
    <property type="protein sequence ID" value="CAC12858.1"/>
    <property type="molecule type" value="Genomic_DNA"/>
</dbReference>
<dbReference type="EMBL" id="CP000117">
    <property type="protein sequence ID" value="ABA21541.1"/>
    <property type="molecule type" value="Genomic_DNA"/>
</dbReference>
<dbReference type="RefSeq" id="WP_010998885.1">
    <property type="nucleotide sequence ID" value="NC_007413.1"/>
</dbReference>
<dbReference type="SMR" id="P0A3Y2"/>
<dbReference type="STRING" id="240292.Ava_1919"/>
<dbReference type="KEGG" id="ava:Ava_1919"/>
<dbReference type="eggNOG" id="ENOG5031VXR">
    <property type="taxonomic scope" value="Bacteria"/>
</dbReference>
<dbReference type="HOGENOM" id="CLU_216743_2_0_3"/>
<dbReference type="Proteomes" id="UP000002533">
    <property type="component" value="Chromosome"/>
</dbReference>
<dbReference type="GO" id="GO:0009512">
    <property type="term" value="C:cytochrome b6f complex"/>
    <property type="evidence" value="ECO:0007669"/>
    <property type="project" value="InterPro"/>
</dbReference>
<dbReference type="GO" id="GO:0031676">
    <property type="term" value="C:plasma membrane-derived thylakoid membrane"/>
    <property type="evidence" value="ECO:0007669"/>
    <property type="project" value="UniProtKB-SubCell"/>
</dbReference>
<dbReference type="GO" id="GO:0009055">
    <property type="term" value="F:electron transfer activity"/>
    <property type="evidence" value="ECO:0007669"/>
    <property type="project" value="UniProtKB-UniRule"/>
</dbReference>
<dbReference type="GO" id="GO:0015979">
    <property type="term" value="P:photosynthesis"/>
    <property type="evidence" value="ECO:0007669"/>
    <property type="project" value="UniProtKB-KW"/>
</dbReference>
<dbReference type="HAMAP" id="MF_00396">
    <property type="entry name" value="Cytb6_f_PetM"/>
    <property type="match status" value="1"/>
</dbReference>
<dbReference type="InterPro" id="IPR012595">
    <property type="entry name" value="PetM_cyt_b6/f_cplx_su7"/>
</dbReference>
<dbReference type="Pfam" id="PF08041">
    <property type="entry name" value="PetM"/>
    <property type="match status" value="1"/>
</dbReference>
<dbReference type="SUPFAM" id="SSF103441">
    <property type="entry name" value="PetM subunit of the cytochrome b6f complex"/>
    <property type="match status" value="1"/>
</dbReference>
<protein>
    <recommendedName>
        <fullName evidence="1">Cytochrome b6-f complex subunit 7</fullName>
    </recommendedName>
    <alternativeName>
        <fullName evidence="1">Cytochrome b6-f complex subunit PetM</fullName>
    </alternativeName>
    <alternativeName>
        <fullName evidence="1">Cytochrome b6-f complex subunit VII</fullName>
    </alternativeName>
</protein>
<gene>
    <name evidence="1" type="primary">petM</name>
    <name type="ordered locus">Ava_1919</name>
</gene>
<keyword id="KW-0249">Electron transport</keyword>
<keyword id="KW-0472">Membrane</keyword>
<keyword id="KW-0602">Photosynthesis</keyword>
<keyword id="KW-0793">Thylakoid</keyword>
<keyword id="KW-0812">Transmembrane</keyword>
<keyword id="KW-1133">Transmembrane helix</keyword>
<keyword id="KW-0813">Transport</keyword>
<name>PETM_TRIV2</name>
<sequence length="34" mass="3546">MSGELLNAALLSFGLIFVGWALGALLLKIQGAEE</sequence>
<reference key="1">
    <citation type="submission" date="2000-10" db="EMBL/GenBank/DDBJ databases">
        <title>b6f complex of Anabaena variabilis.</title>
        <authorList>
            <person name="Arnold M."/>
        </authorList>
    </citation>
    <scope>NUCLEOTIDE SEQUENCE [GENOMIC DNA]</scope>
    <source>
        <strain>FD</strain>
    </source>
</reference>
<reference key="2">
    <citation type="journal article" date="2014" name="Stand. Genomic Sci.">
        <title>Complete genome sequence of Anabaena variabilis ATCC 29413.</title>
        <authorList>
            <person name="Thiel T."/>
            <person name="Pratte B.S."/>
            <person name="Zhong J."/>
            <person name="Goodwin L."/>
            <person name="Copeland A."/>
            <person name="Lucas S."/>
            <person name="Han C."/>
            <person name="Pitluck S."/>
            <person name="Land M.L."/>
            <person name="Kyrpides N.C."/>
            <person name="Woyke T."/>
        </authorList>
    </citation>
    <scope>NUCLEOTIDE SEQUENCE [LARGE SCALE GENOMIC DNA]</scope>
    <source>
        <strain>ATCC 29413 / PCC 7937</strain>
    </source>
</reference>
<organism>
    <name type="scientific">Trichormus variabilis (strain ATCC 29413 / PCC 7937)</name>
    <name type="common">Anabaena variabilis</name>
    <dbReference type="NCBI Taxonomy" id="240292"/>
    <lineage>
        <taxon>Bacteria</taxon>
        <taxon>Bacillati</taxon>
        <taxon>Cyanobacteriota</taxon>
        <taxon>Cyanophyceae</taxon>
        <taxon>Nostocales</taxon>
        <taxon>Nostocaceae</taxon>
        <taxon>Trichormus</taxon>
    </lineage>
</organism>
<accession>P0A3Y2</accession>
<accession>Q3MBU5</accession>
<accession>Q9F4W2</accession>
<evidence type="ECO:0000255" key="1">
    <source>
        <dbReference type="HAMAP-Rule" id="MF_00396"/>
    </source>
</evidence>
<feature type="chain" id="PRO_0000218015" description="Cytochrome b6-f complex subunit 7">
    <location>
        <begin position="1"/>
        <end position="34"/>
    </location>
</feature>
<feature type="transmembrane region" description="Helical" evidence="1">
    <location>
        <begin position="9"/>
        <end position="29"/>
    </location>
</feature>
<proteinExistence type="inferred from homology"/>